<evidence type="ECO:0000255" key="1">
    <source>
        <dbReference type="HAMAP-Rule" id="MF_00409"/>
    </source>
</evidence>
<feature type="chain" id="PRO_0000340819" description="Tetraacyldisaccharide 4'-kinase">
    <location>
        <begin position="1"/>
        <end position="314"/>
    </location>
</feature>
<feature type="binding site" evidence="1">
    <location>
        <begin position="61"/>
        <end position="68"/>
    </location>
    <ligand>
        <name>ATP</name>
        <dbReference type="ChEBI" id="CHEBI:30616"/>
    </ligand>
</feature>
<organism>
    <name type="scientific">Aliarcobacter butzleri (strain RM4018)</name>
    <name type="common">Arcobacter butzleri</name>
    <dbReference type="NCBI Taxonomy" id="367737"/>
    <lineage>
        <taxon>Bacteria</taxon>
        <taxon>Pseudomonadati</taxon>
        <taxon>Campylobacterota</taxon>
        <taxon>Epsilonproteobacteria</taxon>
        <taxon>Campylobacterales</taxon>
        <taxon>Arcobacteraceae</taxon>
        <taxon>Aliarcobacter</taxon>
    </lineage>
</organism>
<comment type="function">
    <text evidence="1">Transfers the gamma-phosphate of ATP to the 4'-position of a tetraacyldisaccharide 1-phosphate intermediate (termed DS-1-P) to form tetraacyldisaccharide 1,4'-bis-phosphate (lipid IVA).</text>
</comment>
<comment type="catalytic activity">
    <reaction evidence="1">
        <text>a lipid A disaccharide + ATP = a lipid IVA + ADP + H(+)</text>
        <dbReference type="Rhea" id="RHEA:67840"/>
        <dbReference type="ChEBI" id="CHEBI:15378"/>
        <dbReference type="ChEBI" id="CHEBI:30616"/>
        <dbReference type="ChEBI" id="CHEBI:176343"/>
        <dbReference type="ChEBI" id="CHEBI:176425"/>
        <dbReference type="ChEBI" id="CHEBI:456216"/>
        <dbReference type="EC" id="2.7.1.130"/>
    </reaction>
</comment>
<comment type="pathway">
    <text evidence="1">Glycolipid biosynthesis; lipid IV(A) biosynthesis; lipid IV(A) from (3R)-3-hydroxytetradecanoyl-[acyl-carrier-protein] and UDP-N-acetyl-alpha-D-glucosamine: step 6/6.</text>
</comment>
<comment type="similarity">
    <text evidence="1">Belongs to the LpxK family.</text>
</comment>
<proteinExistence type="inferred from homology"/>
<accession>A8EU81</accession>
<protein>
    <recommendedName>
        <fullName evidence="1">Tetraacyldisaccharide 4'-kinase</fullName>
        <ecNumber evidence="1">2.7.1.130</ecNumber>
    </recommendedName>
    <alternativeName>
        <fullName evidence="1">Lipid A 4'-kinase</fullName>
    </alternativeName>
</protein>
<keyword id="KW-0067">ATP-binding</keyword>
<keyword id="KW-0418">Kinase</keyword>
<keyword id="KW-0441">Lipid A biosynthesis</keyword>
<keyword id="KW-0444">Lipid biosynthesis</keyword>
<keyword id="KW-0443">Lipid metabolism</keyword>
<keyword id="KW-0547">Nucleotide-binding</keyword>
<keyword id="KW-1185">Reference proteome</keyword>
<keyword id="KW-0808">Transferase</keyword>
<dbReference type="EC" id="2.7.1.130" evidence="1"/>
<dbReference type="EMBL" id="CP000361">
    <property type="protein sequence ID" value="ABV67505.1"/>
    <property type="molecule type" value="Genomic_DNA"/>
</dbReference>
<dbReference type="RefSeq" id="WP_012012926.1">
    <property type="nucleotide sequence ID" value="NC_009850.1"/>
</dbReference>
<dbReference type="SMR" id="A8EU81"/>
<dbReference type="STRING" id="367737.Abu_1248"/>
<dbReference type="GeneID" id="24305560"/>
<dbReference type="KEGG" id="abu:Abu_1248"/>
<dbReference type="eggNOG" id="COG1663">
    <property type="taxonomic scope" value="Bacteria"/>
</dbReference>
<dbReference type="HOGENOM" id="CLU_038816_1_0_7"/>
<dbReference type="UniPathway" id="UPA00359">
    <property type="reaction ID" value="UER00482"/>
</dbReference>
<dbReference type="Proteomes" id="UP000001136">
    <property type="component" value="Chromosome"/>
</dbReference>
<dbReference type="GO" id="GO:0005886">
    <property type="term" value="C:plasma membrane"/>
    <property type="evidence" value="ECO:0007669"/>
    <property type="project" value="TreeGrafter"/>
</dbReference>
<dbReference type="GO" id="GO:0005524">
    <property type="term" value="F:ATP binding"/>
    <property type="evidence" value="ECO:0007669"/>
    <property type="project" value="UniProtKB-UniRule"/>
</dbReference>
<dbReference type="GO" id="GO:0009029">
    <property type="term" value="F:tetraacyldisaccharide 4'-kinase activity"/>
    <property type="evidence" value="ECO:0007669"/>
    <property type="project" value="UniProtKB-UniRule"/>
</dbReference>
<dbReference type="GO" id="GO:0009245">
    <property type="term" value="P:lipid A biosynthetic process"/>
    <property type="evidence" value="ECO:0007669"/>
    <property type="project" value="UniProtKB-UniRule"/>
</dbReference>
<dbReference type="GO" id="GO:0009244">
    <property type="term" value="P:lipopolysaccharide core region biosynthetic process"/>
    <property type="evidence" value="ECO:0007669"/>
    <property type="project" value="TreeGrafter"/>
</dbReference>
<dbReference type="HAMAP" id="MF_00409">
    <property type="entry name" value="LpxK"/>
    <property type="match status" value="1"/>
</dbReference>
<dbReference type="InterPro" id="IPR003758">
    <property type="entry name" value="LpxK"/>
</dbReference>
<dbReference type="NCBIfam" id="TIGR00682">
    <property type="entry name" value="lpxK"/>
    <property type="match status" value="1"/>
</dbReference>
<dbReference type="NCBIfam" id="NF001892">
    <property type="entry name" value="PRK00652.1-5"/>
    <property type="match status" value="1"/>
</dbReference>
<dbReference type="PANTHER" id="PTHR42724">
    <property type="entry name" value="TETRAACYLDISACCHARIDE 4'-KINASE"/>
    <property type="match status" value="1"/>
</dbReference>
<dbReference type="PANTHER" id="PTHR42724:SF1">
    <property type="entry name" value="TETRAACYLDISACCHARIDE 4'-KINASE, MITOCHONDRIAL-RELATED"/>
    <property type="match status" value="1"/>
</dbReference>
<dbReference type="Pfam" id="PF02606">
    <property type="entry name" value="LpxK"/>
    <property type="match status" value="1"/>
</dbReference>
<gene>
    <name evidence="1" type="primary">lpxK</name>
    <name type="ordered locus">Abu_1248</name>
</gene>
<sequence length="314" mass="35989">MKQKIHLWIEEYLFFPKFFQKIISFLLLPLTLIYLIIIFTKRFKAKKIDFDIPIISIGNIIVGGSGKTPITIELASKYENACVILRGYGRSSKGLQIVSLNGDIKVDVTVSGDEAMLLAKSLKKATIIVSENRIEAILKAKELGSKIIFLDDGFSKYSISKFDILLKPKNEPTNNFCLPSGGYREPKSFYKKANIVLQEGKDFKRVITIKKDENIKELPSYTILLTAISKPKRLLEFLPKNIKMISFPDHHNFTKEEILDIQNEYKDYAILTTGKDMVKLKEFNLENLYLMDLSIKIDENVDFSSMNSYINSFK</sequence>
<name>LPXK_ALIB4</name>
<reference key="1">
    <citation type="journal article" date="2007" name="PLoS ONE">
        <title>The complete genome sequence and analysis of the Epsilonproteobacterium Arcobacter butzleri.</title>
        <authorList>
            <person name="Miller W.G."/>
            <person name="Parker C.T."/>
            <person name="Rubenfield M."/>
            <person name="Mendz G.L."/>
            <person name="Woesten M.M.S.M."/>
            <person name="Ussery D.W."/>
            <person name="Stolz J.F."/>
            <person name="Binnewies T.T."/>
            <person name="Hallin P.F."/>
            <person name="Wang G."/>
            <person name="Malek J.A."/>
            <person name="Rogosin A."/>
            <person name="Stanker L.H."/>
            <person name="Mandrell R.E."/>
        </authorList>
    </citation>
    <scope>NUCLEOTIDE SEQUENCE [LARGE SCALE GENOMIC DNA]</scope>
    <source>
        <strain>RM4018</strain>
    </source>
</reference>